<sequence length="164" mass="17338">MTIAIYAGSFDPVTNGHMDVLKGALRLADEVIVAIGVHPGKKPLFTFEERVALIGESSKAILGKDAGRVSVISFDGLVIDAARKHAAQLMVRGLRDGTDLDYEMQMAGMNGTMAPELQTVFLPADPAVRTITATLVRQIASMGGDIKPFVPAAVAAALNTKFKS</sequence>
<comment type="function">
    <text evidence="1">Reversibly transfers an adenylyl group from ATP to 4'-phosphopantetheine, yielding dephospho-CoA (dPCoA) and pyrophosphate.</text>
</comment>
<comment type="catalytic activity">
    <reaction evidence="1">
        <text>(R)-4'-phosphopantetheine + ATP + H(+) = 3'-dephospho-CoA + diphosphate</text>
        <dbReference type="Rhea" id="RHEA:19801"/>
        <dbReference type="ChEBI" id="CHEBI:15378"/>
        <dbReference type="ChEBI" id="CHEBI:30616"/>
        <dbReference type="ChEBI" id="CHEBI:33019"/>
        <dbReference type="ChEBI" id="CHEBI:57328"/>
        <dbReference type="ChEBI" id="CHEBI:61723"/>
        <dbReference type="EC" id="2.7.7.3"/>
    </reaction>
</comment>
<comment type="cofactor">
    <cofactor evidence="1">
        <name>Mg(2+)</name>
        <dbReference type="ChEBI" id="CHEBI:18420"/>
    </cofactor>
</comment>
<comment type="pathway">
    <text evidence="1">Cofactor biosynthesis; coenzyme A biosynthesis; CoA from (R)-pantothenate: step 4/5.</text>
</comment>
<comment type="subunit">
    <text evidence="1">Homohexamer.</text>
</comment>
<comment type="subcellular location">
    <subcellularLocation>
        <location evidence="1">Cytoplasm</location>
    </subcellularLocation>
</comment>
<comment type="similarity">
    <text evidence="1">Belongs to the bacterial CoaD family.</text>
</comment>
<proteinExistence type="inferred from homology"/>
<feature type="chain" id="PRO_1000011192" description="Phosphopantetheine adenylyltransferase">
    <location>
        <begin position="1"/>
        <end position="164"/>
    </location>
</feature>
<feature type="binding site" evidence="1">
    <location>
        <begin position="9"/>
        <end position="10"/>
    </location>
    <ligand>
        <name>ATP</name>
        <dbReference type="ChEBI" id="CHEBI:30616"/>
    </ligand>
</feature>
<feature type="binding site" evidence="1">
    <location>
        <position position="9"/>
    </location>
    <ligand>
        <name>substrate</name>
    </ligand>
</feature>
<feature type="binding site" evidence="1">
    <location>
        <position position="17"/>
    </location>
    <ligand>
        <name>ATP</name>
        <dbReference type="ChEBI" id="CHEBI:30616"/>
    </ligand>
</feature>
<feature type="binding site" evidence="1">
    <location>
        <position position="41"/>
    </location>
    <ligand>
        <name>substrate</name>
    </ligand>
</feature>
<feature type="binding site" evidence="1">
    <location>
        <position position="78"/>
    </location>
    <ligand>
        <name>substrate</name>
    </ligand>
</feature>
<feature type="binding site" evidence="1">
    <location>
        <position position="92"/>
    </location>
    <ligand>
        <name>substrate</name>
    </ligand>
</feature>
<feature type="binding site" evidence="1">
    <location>
        <begin position="93"/>
        <end position="95"/>
    </location>
    <ligand>
        <name>ATP</name>
        <dbReference type="ChEBI" id="CHEBI:30616"/>
    </ligand>
</feature>
<feature type="binding site" evidence="1">
    <location>
        <position position="103"/>
    </location>
    <ligand>
        <name>ATP</name>
        <dbReference type="ChEBI" id="CHEBI:30616"/>
    </ligand>
</feature>
<feature type="binding site" evidence="1">
    <location>
        <begin position="128"/>
        <end position="134"/>
    </location>
    <ligand>
        <name>ATP</name>
        <dbReference type="ChEBI" id="CHEBI:30616"/>
    </ligand>
</feature>
<feature type="site" description="Transition state stabilizer" evidence="1">
    <location>
        <position position="17"/>
    </location>
</feature>
<dbReference type="EC" id="2.7.7.3" evidence="1"/>
<dbReference type="EMBL" id="CP000758">
    <property type="protein sequence ID" value="ABS14896.1"/>
    <property type="molecule type" value="Genomic_DNA"/>
</dbReference>
<dbReference type="RefSeq" id="WP_012092071.1">
    <property type="nucleotide sequence ID" value="NC_009667.1"/>
</dbReference>
<dbReference type="SMR" id="A6X0Z2"/>
<dbReference type="STRING" id="439375.Oant_2180"/>
<dbReference type="GeneID" id="61317368"/>
<dbReference type="KEGG" id="oan:Oant_2180"/>
<dbReference type="PATRIC" id="fig|439375.7.peg.2290"/>
<dbReference type="eggNOG" id="COG0669">
    <property type="taxonomic scope" value="Bacteria"/>
</dbReference>
<dbReference type="HOGENOM" id="CLU_100149_0_1_5"/>
<dbReference type="PhylomeDB" id="A6X0Z2"/>
<dbReference type="UniPathway" id="UPA00241">
    <property type="reaction ID" value="UER00355"/>
</dbReference>
<dbReference type="Proteomes" id="UP000002301">
    <property type="component" value="Chromosome 1"/>
</dbReference>
<dbReference type="GO" id="GO:0005737">
    <property type="term" value="C:cytoplasm"/>
    <property type="evidence" value="ECO:0007669"/>
    <property type="project" value="UniProtKB-SubCell"/>
</dbReference>
<dbReference type="GO" id="GO:0005524">
    <property type="term" value="F:ATP binding"/>
    <property type="evidence" value="ECO:0007669"/>
    <property type="project" value="UniProtKB-KW"/>
</dbReference>
<dbReference type="GO" id="GO:0004595">
    <property type="term" value="F:pantetheine-phosphate adenylyltransferase activity"/>
    <property type="evidence" value="ECO:0007669"/>
    <property type="project" value="UniProtKB-UniRule"/>
</dbReference>
<dbReference type="GO" id="GO:0015937">
    <property type="term" value="P:coenzyme A biosynthetic process"/>
    <property type="evidence" value="ECO:0007669"/>
    <property type="project" value="UniProtKB-UniRule"/>
</dbReference>
<dbReference type="CDD" id="cd02163">
    <property type="entry name" value="PPAT"/>
    <property type="match status" value="1"/>
</dbReference>
<dbReference type="Gene3D" id="3.40.50.620">
    <property type="entry name" value="HUPs"/>
    <property type="match status" value="1"/>
</dbReference>
<dbReference type="HAMAP" id="MF_00151">
    <property type="entry name" value="PPAT_bact"/>
    <property type="match status" value="1"/>
</dbReference>
<dbReference type="InterPro" id="IPR004821">
    <property type="entry name" value="Cyt_trans-like"/>
</dbReference>
<dbReference type="InterPro" id="IPR001980">
    <property type="entry name" value="PPAT"/>
</dbReference>
<dbReference type="InterPro" id="IPR014729">
    <property type="entry name" value="Rossmann-like_a/b/a_fold"/>
</dbReference>
<dbReference type="NCBIfam" id="TIGR01510">
    <property type="entry name" value="coaD_prev_kdtB"/>
    <property type="match status" value="1"/>
</dbReference>
<dbReference type="NCBIfam" id="TIGR00125">
    <property type="entry name" value="cyt_tran_rel"/>
    <property type="match status" value="1"/>
</dbReference>
<dbReference type="PANTHER" id="PTHR21342">
    <property type="entry name" value="PHOSPHOPANTETHEINE ADENYLYLTRANSFERASE"/>
    <property type="match status" value="1"/>
</dbReference>
<dbReference type="PANTHER" id="PTHR21342:SF1">
    <property type="entry name" value="PHOSPHOPANTETHEINE ADENYLYLTRANSFERASE"/>
    <property type="match status" value="1"/>
</dbReference>
<dbReference type="Pfam" id="PF01467">
    <property type="entry name" value="CTP_transf_like"/>
    <property type="match status" value="1"/>
</dbReference>
<dbReference type="PRINTS" id="PR01020">
    <property type="entry name" value="LPSBIOSNTHSS"/>
</dbReference>
<dbReference type="SUPFAM" id="SSF52374">
    <property type="entry name" value="Nucleotidylyl transferase"/>
    <property type="match status" value="1"/>
</dbReference>
<keyword id="KW-0067">ATP-binding</keyword>
<keyword id="KW-0173">Coenzyme A biosynthesis</keyword>
<keyword id="KW-0963">Cytoplasm</keyword>
<keyword id="KW-0460">Magnesium</keyword>
<keyword id="KW-0547">Nucleotide-binding</keyword>
<keyword id="KW-0548">Nucleotidyltransferase</keyword>
<keyword id="KW-1185">Reference proteome</keyword>
<keyword id="KW-0808">Transferase</keyword>
<accession>A6X0Z2</accession>
<name>COAD_BRUA4</name>
<evidence type="ECO:0000255" key="1">
    <source>
        <dbReference type="HAMAP-Rule" id="MF_00151"/>
    </source>
</evidence>
<organism>
    <name type="scientific">Brucella anthropi (strain ATCC 49188 / DSM 6882 / CCUG 24695 / JCM 21032 / LMG 3331 / NBRC 15819 / NCTC 12168 / Alc 37)</name>
    <name type="common">Ochrobactrum anthropi</name>
    <dbReference type="NCBI Taxonomy" id="439375"/>
    <lineage>
        <taxon>Bacteria</taxon>
        <taxon>Pseudomonadati</taxon>
        <taxon>Pseudomonadota</taxon>
        <taxon>Alphaproteobacteria</taxon>
        <taxon>Hyphomicrobiales</taxon>
        <taxon>Brucellaceae</taxon>
        <taxon>Brucella/Ochrobactrum group</taxon>
        <taxon>Brucella</taxon>
    </lineage>
</organism>
<protein>
    <recommendedName>
        <fullName evidence="1">Phosphopantetheine adenylyltransferase</fullName>
        <ecNumber evidence="1">2.7.7.3</ecNumber>
    </recommendedName>
    <alternativeName>
        <fullName evidence="1">Dephospho-CoA pyrophosphorylase</fullName>
    </alternativeName>
    <alternativeName>
        <fullName evidence="1">Pantetheine-phosphate adenylyltransferase</fullName>
        <shortName evidence="1">PPAT</shortName>
    </alternativeName>
</protein>
<reference key="1">
    <citation type="journal article" date="2011" name="J. Bacteriol.">
        <title>Genome of Ochrobactrum anthropi ATCC 49188 T, a versatile opportunistic pathogen and symbiont of several eukaryotic hosts.</title>
        <authorList>
            <person name="Chain P.S."/>
            <person name="Lang D.M."/>
            <person name="Comerci D.J."/>
            <person name="Malfatti S.A."/>
            <person name="Vergez L.M."/>
            <person name="Shin M."/>
            <person name="Ugalde R.A."/>
            <person name="Garcia E."/>
            <person name="Tolmasky M.E."/>
        </authorList>
    </citation>
    <scope>NUCLEOTIDE SEQUENCE [LARGE SCALE GENOMIC DNA]</scope>
    <source>
        <strain>ATCC 49188 / DSM 6882 / CCUG 24695 / JCM 21032 / LMG 3331 / NBRC 15819 / NCTC 12168 / Alc 37</strain>
    </source>
</reference>
<gene>
    <name evidence="1" type="primary">coaD</name>
    <name type="ordered locus">Oant_2180</name>
</gene>